<sequence>MNPRRKKRLGLILALFVGISATVGLMLYALNQNMDLFYTPTELVNGKPDGTKPEVGQRLRIGGMVVAGSVVRDSNSLEVSFKVADVGPQVTVIYDGILPDLFREGQGIVAQGVLVDATTIKAHEVLAKHDEEYMPPEVAEAMKKTHEPLQYTEQQKQGTGQ</sequence>
<gene>
    <name evidence="1" type="primary">ccmE</name>
    <name evidence="1" type="synonym">cycJ</name>
    <name type="ordered locus">VFMJ11_1953</name>
</gene>
<keyword id="KW-0997">Cell inner membrane</keyword>
<keyword id="KW-1003">Cell membrane</keyword>
<keyword id="KW-0201">Cytochrome c-type biogenesis</keyword>
<keyword id="KW-0349">Heme</keyword>
<keyword id="KW-0408">Iron</keyword>
<keyword id="KW-0472">Membrane</keyword>
<keyword id="KW-0479">Metal-binding</keyword>
<keyword id="KW-0735">Signal-anchor</keyword>
<keyword id="KW-0812">Transmembrane</keyword>
<keyword id="KW-1133">Transmembrane helix</keyword>
<dbReference type="EMBL" id="CP001139">
    <property type="protein sequence ID" value="ACH65923.1"/>
    <property type="molecule type" value="Genomic_DNA"/>
</dbReference>
<dbReference type="RefSeq" id="WP_005420292.1">
    <property type="nucleotide sequence ID" value="NC_011184.1"/>
</dbReference>
<dbReference type="SMR" id="B5FGC4"/>
<dbReference type="KEGG" id="vfm:VFMJ11_1953"/>
<dbReference type="HOGENOM" id="CLU_079503_1_0_6"/>
<dbReference type="Proteomes" id="UP000001857">
    <property type="component" value="Chromosome I"/>
</dbReference>
<dbReference type="GO" id="GO:0005886">
    <property type="term" value="C:plasma membrane"/>
    <property type="evidence" value="ECO:0007669"/>
    <property type="project" value="UniProtKB-SubCell"/>
</dbReference>
<dbReference type="GO" id="GO:0020037">
    <property type="term" value="F:heme binding"/>
    <property type="evidence" value="ECO:0007669"/>
    <property type="project" value="InterPro"/>
</dbReference>
<dbReference type="GO" id="GO:0046872">
    <property type="term" value="F:metal ion binding"/>
    <property type="evidence" value="ECO:0007669"/>
    <property type="project" value="UniProtKB-KW"/>
</dbReference>
<dbReference type="GO" id="GO:0017004">
    <property type="term" value="P:cytochrome complex assembly"/>
    <property type="evidence" value="ECO:0007669"/>
    <property type="project" value="UniProtKB-KW"/>
</dbReference>
<dbReference type="FunFam" id="2.40.50.140:FF:000104">
    <property type="entry name" value="Cytochrome c-type biogenesis protein CcmE"/>
    <property type="match status" value="1"/>
</dbReference>
<dbReference type="Gene3D" id="2.40.50.140">
    <property type="entry name" value="Nucleic acid-binding proteins"/>
    <property type="match status" value="1"/>
</dbReference>
<dbReference type="HAMAP" id="MF_01959">
    <property type="entry name" value="CcmE"/>
    <property type="match status" value="1"/>
</dbReference>
<dbReference type="InterPro" id="IPR004329">
    <property type="entry name" value="CcmE"/>
</dbReference>
<dbReference type="InterPro" id="IPR036127">
    <property type="entry name" value="CcmE-like_sf"/>
</dbReference>
<dbReference type="InterPro" id="IPR012340">
    <property type="entry name" value="NA-bd_OB-fold"/>
</dbReference>
<dbReference type="NCBIfam" id="NF009638">
    <property type="entry name" value="PRK13165.1"/>
    <property type="match status" value="1"/>
</dbReference>
<dbReference type="NCBIfam" id="NF009727">
    <property type="entry name" value="PRK13254.1-1"/>
    <property type="match status" value="1"/>
</dbReference>
<dbReference type="NCBIfam" id="NF009729">
    <property type="entry name" value="PRK13254.1-3"/>
    <property type="match status" value="1"/>
</dbReference>
<dbReference type="NCBIfam" id="NF009731">
    <property type="entry name" value="PRK13254.1-5"/>
    <property type="match status" value="1"/>
</dbReference>
<dbReference type="PANTHER" id="PTHR34128">
    <property type="entry name" value="CYTOCHROME C-TYPE BIOGENESIS PROTEIN CCME HOMOLOG, MITOCHONDRIAL"/>
    <property type="match status" value="1"/>
</dbReference>
<dbReference type="PANTHER" id="PTHR34128:SF2">
    <property type="entry name" value="CYTOCHROME C-TYPE BIOGENESIS PROTEIN CCME HOMOLOG, MITOCHONDRIAL"/>
    <property type="match status" value="1"/>
</dbReference>
<dbReference type="Pfam" id="PF03100">
    <property type="entry name" value="CcmE"/>
    <property type="match status" value="1"/>
</dbReference>
<dbReference type="SUPFAM" id="SSF82093">
    <property type="entry name" value="Heme chaperone CcmE"/>
    <property type="match status" value="1"/>
</dbReference>
<protein>
    <recommendedName>
        <fullName evidence="1">Cytochrome c-type biogenesis protein CcmE</fullName>
    </recommendedName>
    <alternativeName>
        <fullName evidence="1">Cytochrome c maturation protein E</fullName>
    </alternativeName>
    <alternativeName>
        <fullName evidence="1">Heme chaperone CcmE</fullName>
    </alternativeName>
</protein>
<reference key="1">
    <citation type="submission" date="2008-08" db="EMBL/GenBank/DDBJ databases">
        <title>Complete sequence of Vibrio fischeri strain MJ11.</title>
        <authorList>
            <person name="Mandel M.J."/>
            <person name="Stabb E.V."/>
            <person name="Ruby E.G."/>
            <person name="Ferriera S."/>
            <person name="Johnson J."/>
            <person name="Kravitz S."/>
            <person name="Beeson K."/>
            <person name="Sutton G."/>
            <person name="Rogers Y.-H."/>
            <person name="Friedman R."/>
            <person name="Frazier M."/>
            <person name="Venter J.C."/>
        </authorList>
    </citation>
    <scope>NUCLEOTIDE SEQUENCE [LARGE SCALE GENOMIC DNA]</scope>
    <source>
        <strain>MJ11</strain>
    </source>
</reference>
<accession>B5FGC4</accession>
<name>CCME_ALIFM</name>
<organism>
    <name type="scientific">Aliivibrio fischeri (strain MJ11)</name>
    <name type="common">Vibrio fischeri</name>
    <dbReference type="NCBI Taxonomy" id="388396"/>
    <lineage>
        <taxon>Bacteria</taxon>
        <taxon>Pseudomonadati</taxon>
        <taxon>Pseudomonadota</taxon>
        <taxon>Gammaproteobacteria</taxon>
        <taxon>Vibrionales</taxon>
        <taxon>Vibrionaceae</taxon>
        <taxon>Aliivibrio</taxon>
    </lineage>
</organism>
<evidence type="ECO:0000255" key="1">
    <source>
        <dbReference type="HAMAP-Rule" id="MF_01959"/>
    </source>
</evidence>
<evidence type="ECO:0000256" key="2">
    <source>
        <dbReference type="SAM" id="MobiDB-lite"/>
    </source>
</evidence>
<feature type="chain" id="PRO_1000189057" description="Cytochrome c-type biogenesis protein CcmE">
    <location>
        <begin position="1"/>
        <end position="161"/>
    </location>
</feature>
<feature type="topological domain" description="Cytoplasmic" evidence="1">
    <location>
        <begin position="1"/>
        <end position="8"/>
    </location>
</feature>
<feature type="transmembrane region" description="Helical; Signal-anchor for type II membrane protein" evidence="1">
    <location>
        <begin position="9"/>
        <end position="29"/>
    </location>
</feature>
<feature type="topological domain" description="Periplasmic" evidence="1">
    <location>
        <begin position="30"/>
        <end position="161"/>
    </location>
</feature>
<feature type="region of interest" description="Disordered" evidence="2">
    <location>
        <begin position="142"/>
        <end position="161"/>
    </location>
</feature>
<feature type="compositionally biased region" description="Polar residues" evidence="2">
    <location>
        <begin position="151"/>
        <end position="161"/>
    </location>
</feature>
<feature type="binding site" description="covalent" evidence="1">
    <location>
        <position position="129"/>
    </location>
    <ligand>
        <name>heme</name>
        <dbReference type="ChEBI" id="CHEBI:30413"/>
    </ligand>
</feature>
<feature type="binding site" description="axial binding residue" evidence="1">
    <location>
        <position position="133"/>
    </location>
    <ligand>
        <name>heme</name>
        <dbReference type="ChEBI" id="CHEBI:30413"/>
    </ligand>
    <ligandPart>
        <name>Fe</name>
        <dbReference type="ChEBI" id="CHEBI:18248"/>
    </ligandPart>
</feature>
<comment type="function">
    <text evidence="1">Heme chaperone required for the biogenesis of c-type cytochromes. Transiently binds heme delivered by CcmC and transfers the heme to apo-cytochromes in a process facilitated by CcmF and CcmH.</text>
</comment>
<comment type="subcellular location">
    <subcellularLocation>
        <location evidence="1">Cell inner membrane</location>
        <topology evidence="1">Single-pass type II membrane protein</topology>
        <orientation evidence="1">Periplasmic side</orientation>
    </subcellularLocation>
</comment>
<comment type="similarity">
    <text evidence="1">Belongs to the CcmE/CycJ family.</text>
</comment>
<proteinExistence type="inferred from homology"/>